<dbReference type="EC" id="2.7.11.1"/>
<dbReference type="EMBL" id="AE016819">
    <property type="protein sequence ID" value="AAS53748.1"/>
    <property type="molecule type" value="Genomic_DNA"/>
</dbReference>
<dbReference type="RefSeq" id="NP_985924.1">
    <property type="nucleotide sequence ID" value="NM_211279.1"/>
</dbReference>
<dbReference type="SMR" id="Q753D9"/>
<dbReference type="FunCoup" id="Q753D9">
    <property type="interactions" value="333"/>
</dbReference>
<dbReference type="STRING" id="284811.Q753D9"/>
<dbReference type="EnsemblFungi" id="AAS53748">
    <property type="protein sequence ID" value="AAS53748"/>
    <property type="gene ID" value="AGOS_AFR377C"/>
</dbReference>
<dbReference type="GeneID" id="4622194"/>
<dbReference type="KEGG" id="ago:AGOS_AFR377C"/>
<dbReference type="eggNOG" id="KOG0592">
    <property type="taxonomic scope" value="Eukaryota"/>
</dbReference>
<dbReference type="HOGENOM" id="CLU_008400_0_0_1"/>
<dbReference type="InParanoid" id="Q753D9"/>
<dbReference type="OMA" id="CSKRHII"/>
<dbReference type="OrthoDB" id="347657at2759"/>
<dbReference type="Proteomes" id="UP000000591">
    <property type="component" value="Chromosome VI"/>
</dbReference>
<dbReference type="GO" id="GO:0005524">
    <property type="term" value="F:ATP binding"/>
    <property type="evidence" value="ECO:0007669"/>
    <property type="project" value="UniProtKB-KW"/>
</dbReference>
<dbReference type="GO" id="GO:0106310">
    <property type="term" value="F:protein serine kinase activity"/>
    <property type="evidence" value="ECO:0007669"/>
    <property type="project" value="RHEA"/>
</dbReference>
<dbReference type="GO" id="GO:0004674">
    <property type="term" value="F:protein serine/threonine kinase activity"/>
    <property type="evidence" value="ECO:0000318"/>
    <property type="project" value="GO_Central"/>
</dbReference>
<dbReference type="GO" id="GO:0000196">
    <property type="term" value="P:cell integrity MAPK cascade"/>
    <property type="evidence" value="ECO:0007669"/>
    <property type="project" value="EnsemblFungi"/>
</dbReference>
<dbReference type="GO" id="GO:0035556">
    <property type="term" value="P:intracellular signal transduction"/>
    <property type="evidence" value="ECO:0000318"/>
    <property type="project" value="GO_Central"/>
</dbReference>
<dbReference type="CDD" id="cd05581">
    <property type="entry name" value="STKc_PDK1"/>
    <property type="match status" value="1"/>
</dbReference>
<dbReference type="FunFam" id="3.30.200.20:FF:000191">
    <property type="entry name" value="3-phosphoinositide-dependent protein kinase 2-like"/>
    <property type="match status" value="1"/>
</dbReference>
<dbReference type="FunFam" id="1.10.510.10:FF:000534">
    <property type="entry name" value="Serine/threonine-protein kinase PKH2"/>
    <property type="match status" value="1"/>
</dbReference>
<dbReference type="Gene3D" id="3.30.200.20">
    <property type="entry name" value="Phosphorylase Kinase, domain 1"/>
    <property type="match status" value="1"/>
</dbReference>
<dbReference type="Gene3D" id="1.10.510.10">
    <property type="entry name" value="Transferase(Phosphotransferase) domain 1"/>
    <property type="match status" value="1"/>
</dbReference>
<dbReference type="InterPro" id="IPR011009">
    <property type="entry name" value="Kinase-like_dom_sf"/>
</dbReference>
<dbReference type="InterPro" id="IPR039046">
    <property type="entry name" value="PDPK1"/>
</dbReference>
<dbReference type="InterPro" id="IPR000719">
    <property type="entry name" value="Prot_kinase_dom"/>
</dbReference>
<dbReference type="InterPro" id="IPR017441">
    <property type="entry name" value="Protein_kinase_ATP_BS"/>
</dbReference>
<dbReference type="InterPro" id="IPR008271">
    <property type="entry name" value="Ser/Thr_kinase_AS"/>
</dbReference>
<dbReference type="InterPro" id="IPR050236">
    <property type="entry name" value="Ser_Thr_kinase_AGC"/>
</dbReference>
<dbReference type="PANTHER" id="PTHR24356">
    <property type="entry name" value="SERINE/THREONINE-PROTEIN KINASE"/>
    <property type="match status" value="1"/>
</dbReference>
<dbReference type="PANTHER" id="PTHR24356:SF405">
    <property type="entry name" value="SERINE_THREONINE-PROTEIN KINASE PKH3"/>
    <property type="match status" value="1"/>
</dbReference>
<dbReference type="Pfam" id="PF25347">
    <property type="entry name" value="PH_PKH3_C"/>
    <property type="match status" value="1"/>
</dbReference>
<dbReference type="Pfam" id="PF00069">
    <property type="entry name" value="Pkinase"/>
    <property type="match status" value="1"/>
</dbReference>
<dbReference type="SMART" id="SM00220">
    <property type="entry name" value="S_TKc"/>
    <property type="match status" value="1"/>
</dbReference>
<dbReference type="SUPFAM" id="SSF56112">
    <property type="entry name" value="Protein kinase-like (PK-like)"/>
    <property type="match status" value="1"/>
</dbReference>
<dbReference type="PROSITE" id="PS00107">
    <property type="entry name" value="PROTEIN_KINASE_ATP"/>
    <property type="match status" value="1"/>
</dbReference>
<dbReference type="PROSITE" id="PS50011">
    <property type="entry name" value="PROTEIN_KINASE_DOM"/>
    <property type="match status" value="1"/>
</dbReference>
<dbReference type="PROSITE" id="PS00108">
    <property type="entry name" value="PROTEIN_KINASE_ST"/>
    <property type="match status" value="1"/>
</dbReference>
<feature type="chain" id="PRO_0000086553" description="Serine/threonine-protein kinase PKH3">
    <location>
        <begin position="1"/>
        <end position="726"/>
    </location>
</feature>
<feature type="domain" description="Protein kinase" evidence="2">
    <location>
        <begin position="10"/>
        <end position="271"/>
    </location>
</feature>
<feature type="region of interest" description="Disordered" evidence="4">
    <location>
        <begin position="629"/>
        <end position="679"/>
    </location>
</feature>
<feature type="compositionally biased region" description="Basic and acidic residues" evidence="4">
    <location>
        <begin position="663"/>
        <end position="673"/>
    </location>
</feature>
<feature type="active site" description="Proton acceptor" evidence="2 3">
    <location>
        <position position="136"/>
    </location>
</feature>
<feature type="binding site" evidence="2">
    <location>
        <begin position="16"/>
        <end position="24"/>
    </location>
    <ligand>
        <name>ATP</name>
        <dbReference type="ChEBI" id="CHEBI:30616"/>
    </ligand>
</feature>
<feature type="binding site" evidence="2">
    <location>
        <position position="39"/>
    </location>
    <ligand>
        <name>ATP</name>
        <dbReference type="ChEBI" id="CHEBI:30616"/>
    </ligand>
</feature>
<protein>
    <recommendedName>
        <fullName>Serine/threonine-protein kinase PKH3</fullName>
        <ecNumber>2.7.11.1</ecNumber>
    </recommendedName>
</protein>
<evidence type="ECO:0000250" key="1"/>
<evidence type="ECO:0000255" key="2">
    <source>
        <dbReference type="PROSITE-ProRule" id="PRU00159"/>
    </source>
</evidence>
<evidence type="ECO:0000255" key="3">
    <source>
        <dbReference type="PROSITE-ProRule" id="PRU10027"/>
    </source>
</evidence>
<evidence type="ECO:0000256" key="4">
    <source>
        <dbReference type="SAM" id="MobiDB-lite"/>
    </source>
</evidence>
<accession>Q753D9</accession>
<keyword id="KW-0067">ATP-binding</keyword>
<keyword id="KW-0418">Kinase</keyword>
<keyword id="KW-0547">Nucleotide-binding</keyword>
<keyword id="KW-1185">Reference proteome</keyword>
<keyword id="KW-0723">Serine/threonine-protein kinase</keyword>
<keyword id="KW-0808">Transferase</keyword>
<reference key="1">
    <citation type="journal article" date="2004" name="Science">
        <title>The Ashbya gossypii genome as a tool for mapping the ancient Saccharomyces cerevisiae genome.</title>
        <authorList>
            <person name="Dietrich F.S."/>
            <person name="Voegeli S."/>
            <person name="Brachat S."/>
            <person name="Lerch A."/>
            <person name="Gates K."/>
            <person name="Steiner S."/>
            <person name="Mohr C."/>
            <person name="Poehlmann R."/>
            <person name="Luedi P."/>
            <person name="Choi S."/>
            <person name="Wing R.A."/>
            <person name="Flavier A."/>
            <person name="Gaffney T.D."/>
            <person name="Philippsen P."/>
        </authorList>
    </citation>
    <scope>NUCLEOTIDE SEQUENCE [LARGE SCALE GENOMIC DNA]</scope>
    <source>
        <strain>ATCC 10895 / CBS 109.51 / FGSC 9923 / NRRL Y-1056</strain>
    </source>
</reference>
<reference key="2">
    <citation type="journal article" date="2013" name="G3 (Bethesda)">
        <title>Genomes of Ashbya fungi isolated from insects reveal four mating-type loci, numerous translocations, lack of transposons, and distinct gene duplications.</title>
        <authorList>
            <person name="Dietrich F.S."/>
            <person name="Voegeli S."/>
            <person name="Kuo S."/>
            <person name="Philippsen P."/>
        </authorList>
    </citation>
    <scope>GENOME REANNOTATION</scope>
    <source>
        <strain>ATCC 10895 / CBS 109.51 / FGSC 9923 / NRRL Y-1056</strain>
    </source>
</reference>
<sequence>MSKRKSPHDFLFREELGHGSYSTVYRVVERSSQHQYAIKICSKRHIIGENKVKYVTIEKNTLNLLGQANHPGIIKLYYTFHDQENLYFVMDLAPGGELLQLLRRQRVFSEAWARHYMCQLVDTVEYIHSMGVIHRDLKPENVLLDKEGRLMIADFGAAYTVGQSDAGSDGDKPATSFVGTAEYVSPELLLENKSYYSSDVWALGCMLYQFLQGTPPFRGQNEMETFEQIVNLDYTWRIPANPLAAGLVSKILVLDPSQRYTLEQIKKHKWFSGVDWNNKEKIWRGSWTIASESTPRPRVGYKSRELLDTPIKNIPVVTQRNKKPTKMNTTSSIVEWRKMLGLSGNDLGIKATLGGNGLPIAPFTPTSGITPDNRGDNAVAPAKTRDAFRPMSSRVISSPHSKPSGRPAALPLPLQTGTPSHNVVQQIVVNTPGRTETSSPYVSPTVPVRNAIWKQDWVQLHEIPYSAKYSGLTLAGFSQVSDTLIADLISHHANELRTLSRTGILSLDNTGYLSFIEQGRARPLSRIIDPDLSIYEYQLGHSTEDDFLILEKYKQSIWIVWPNKPTSASRRIPIKETWAQTLSKYKKQVSDEEELSAKLNRTCVSSWGSRTPSPTYPAEGKTRVAVQPQDIPLPSPAKSSSNSGVSEPISKIPPRQLVSASEQSHKAKSEAHTKKANSYSYIAPNDMVLSSSRYEVLRTASNNDSKSNGAAVSGASAAFRTLRVNK</sequence>
<name>PKH3_EREGS</name>
<comment type="function">
    <text evidence="1">Serine/threonine-protein kinase.</text>
</comment>
<comment type="catalytic activity">
    <reaction>
        <text>L-seryl-[protein] + ATP = O-phospho-L-seryl-[protein] + ADP + H(+)</text>
        <dbReference type="Rhea" id="RHEA:17989"/>
        <dbReference type="Rhea" id="RHEA-COMP:9863"/>
        <dbReference type="Rhea" id="RHEA-COMP:11604"/>
        <dbReference type="ChEBI" id="CHEBI:15378"/>
        <dbReference type="ChEBI" id="CHEBI:29999"/>
        <dbReference type="ChEBI" id="CHEBI:30616"/>
        <dbReference type="ChEBI" id="CHEBI:83421"/>
        <dbReference type="ChEBI" id="CHEBI:456216"/>
        <dbReference type="EC" id="2.7.11.1"/>
    </reaction>
</comment>
<comment type="catalytic activity">
    <reaction>
        <text>L-threonyl-[protein] + ATP = O-phospho-L-threonyl-[protein] + ADP + H(+)</text>
        <dbReference type="Rhea" id="RHEA:46608"/>
        <dbReference type="Rhea" id="RHEA-COMP:11060"/>
        <dbReference type="Rhea" id="RHEA-COMP:11605"/>
        <dbReference type="ChEBI" id="CHEBI:15378"/>
        <dbReference type="ChEBI" id="CHEBI:30013"/>
        <dbReference type="ChEBI" id="CHEBI:30616"/>
        <dbReference type="ChEBI" id="CHEBI:61977"/>
        <dbReference type="ChEBI" id="CHEBI:456216"/>
        <dbReference type="EC" id="2.7.11.1"/>
    </reaction>
</comment>
<comment type="similarity">
    <text evidence="2">Belongs to the protein kinase superfamily. Ser/Thr protein kinase family.</text>
</comment>
<gene>
    <name type="primary">PKH3</name>
    <name type="ordered locus">AFR377C</name>
</gene>
<proteinExistence type="inferred from homology"/>
<organism>
    <name type="scientific">Eremothecium gossypii (strain ATCC 10895 / CBS 109.51 / FGSC 9923 / NRRL Y-1056)</name>
    <name type="common">Yeast</name>
    <name type="synonym">Ashbya gossypii</name>
    <dbReference type="NCBI Taxonomy" id="284811"/>
    <lineage>
        <taxon>Eukaryota</taxon>
        <taxon>Fungi</taxon>
        <taxon>Dikarya</taxon>
        <taxon>Ascomycota</taxon>
        <taxon>Saccharomycotina</taxon>
        <taxon>Saccharomycetes</taxon>
        <taxon>Saccharomycetales</taxon>
        <taxon>Saccharomycetaceae</taxon>
        <taxon>Eremothecium</taxon>
    </lineage>
</organism>